<accession>P77931</accession>
<evidence type="ECO:0000250" key="1"/>
<evidence type="ECO:0000255" key="2"/>
<evidence type="ECO:0000269" key="3">
    <source>
    </source>
</evidence>
<evidence type="ECO:0000305" key="4"/>
<proteinExistence type="evidence at protein level"/>
<dbReference type="EC" id="1.1.2.6"/>
<dbReference type="EMBL" id="D50670">
    <property type="protein sequence ID" value="BAA09321.1"/>
    <property type="molecule type" value="Genomic_DNA"/>
</dbReference>
<dbReference type="EMBL" id="AB008494">
    <property type="protein sequence ID" value="BAA94193.1"/>
    <property type="molecule type" value="Genomic_DNA"/>
</dbReference>
<dbReference type="PIR" id="JC4881">
    <property type="entry name" value="JC4881"/>
</dbReference>
<dbReference type="SMR" id="P77931"/>
<dbReference type="BRENDA" id="1.1.2.6">
    <property type="organism ID" value="5085"/>
</dbReference>
<dbReference type="GO" id="GO:0005737">
    <property type="term" value="C:cytoplasm"/>
    <property type="evidence" value="ECO:0007669"/>
    <property type="project" value="UniProtKB-SubCell"/>
</dbReference>
<dbReference type="GO" id="GO:0009055">
    <property type="term" value="F:electron transfer activity"/>
    <property type="evidence" value="ECO:0007669"/>
    <property type="project" value="InterPro"/>
</dbReference>
<dbReference type="GO" id="GO:0020037">
    <property type="term" value="F:heme binding"/>
    <property type="evidence" value="ECO:0007669"/>
    <property type="project" value="InterPro"/>
</dbReference>
<dbReference type="GO" id="GO:0046872">
    <property type="term" value="F:metal ion binding"/>
    <property type="evidence" value="ECO:0007669"/>
    <property type="project" value="UniProtKB-KW"/>
</dbReference>
<dbReference type="GO" id="GO:0047059">
    <property type="term" value="F:polyvinyl alcohol dehydrogenase (cytochrome) activity"/>
    <property type="evidence" value="ECO:0007669"/>
    <property type="project" value="UniProtKB-EC"/>
</dbReference>
<dbReference type="Gene3D" id="2.140.10.10">
    <property type="entry name" value="Quinoprotein alcohol dehydrogenase-like superfamily"/>
    <property type="match status" value="2"/>
</dbReference>
<dbReference type="InterPro" id="IPR036909">
    <property type="entry name" value="Cyt_c-like_dom_sf"/>
</dbReference>
<dbReference type="InterPro" id="IPR018391">
    <property type="entry name" value="PQQ_b-propeller_rpt"/>
</dbReference>
<dbReference type="InterPro" id="IPR002372">
    <property type="entry name" value="PQQ_rpt_dom"/>
</dbReference>
<dbReference type="InterPro" id="IPR011047">
    <property type="entry name" value="Quinoprotein_ADH-like_sf"/>
</dbReference>
<dbReference type="PANTHER" id="PTHR32303:SF10">
    <property type="entry name" value="OUTER MEMBRANE PROTEIN ASSEMBLY FACTOR BAMB"/>
    <property type="match status" value="1"/>
</dbReference>
<dbReference type="PANTHER" id="PTHR32303">
    <property type="entry name" value="QUINOPROTEIN ALCOHOL DEHYDROGENASE (CYTOCHROME C)"/>
    <property type="match status" value="1"/>
</dbReference>
<dbReference type="Pfam" id="PF01011">
    <property type="entry name" value="PQQ"/>
    <property type="match status" value="1"/>
</dbReference>
<dbReference type="Pfam" id="PF13360">
    <property type="entry name" value="PQQ_2"/>
    <property type="match status" value="1"/>
</dbReference>
<dbReference type="SMART" id="SM00564">
    <property type="entry name" value="PQQ"/>
    <property type="match status" value="7"/>
</dbReference>
<dbReference type="SUPFAM" id="SSF46626">
    <property type="entry name" value="Cytochrome c"/>
    <property type="match status" value="1"/>
</dbReference>
<dbReference type="SUPFAM" id="SSF50998">
    <property type="entry name" value="Quinoprotein alcohol dehydrogenase-like"/>
    <property type="match status" value="1"/>
</dbReference>
<gene>
    <name type="primary">pvaA</name>
</gene>
<reference key="1">
    <citation type="journal article" date="1996" name="Biosci. Biotechnol. Biochem.">
        <title>Cloning and characterization of the gene encoding pyrroloquinoline quinone-dependent poly(vinyl alcohol) dehydrogenase of Pseudomonas sp. strain VM15C.</title>
        <authorList>
            <person name="Shimao M."/>
            <person name="Tamogami T."/>
            <person name="Nishi K."/>
            <person name="Harayama S."/>
        </authorList>
    </citation>
    <scope>NUCLEOTIDE SEQUENCE [GENOMIC DNA]</scope>
    <scope>FUNCTION</scope>
    <scope>CATALYTIC ACTIVITY</scope>
    <scope>COFACTOR</scope>
    <scope>SUBCELLULAR LOCATION</scope>
    <source>
        <strain>VM15C</strain>
    </source>
</reference>
<reference key="2">
    <citation type="journal article" date="2000" name="Microbiology">
        <title>The gene pvaB encodes oxidized polyvinyl alcohol hydrolase of Pseudomonas sp. strain VM15C and forms an operon with the polyvinyl alcohol dehydrogenase gene pvaA.</title>
        <authorList>
            <person name="Shimao M."/>
            <person name="Tamogami T."/>
            <person name="Kishida S."/>
            <person name="Harayama S."/>
        </authorList>
    </citation>
    <scope>NUCLEOTIDE SEQUENCE [GENOMIC DNA]</scope>
    <source>
        <strain>VM15C</strain>
    </source>
</reference>
<protein>
    <recommendedName>
        <fullName>Polyvinylalcohol dehydrogenase</fullName>
        <shortName>PVA dehydrogenase</shortName>
        <shortName>PVADH</shortName>
        <ecNumber>1.1.2.6</ecNumber>
    </recommendedName>
    <alternativeName>
        <fullName>Polyvinyl alcohol dehydrogenase (cytochrome)</fullName>
    </alternativeName>
</protein>
<sequence>MQQNIERNQVSMTTSRFVWGAVMALVALGSASAAELNLPDGAALYRARCGTCHDNPQDRTPARDVIARNSPAFIMAAMNGVMAPMAAGLSEAEKQAIALHLGARPAGGSQEINPHAIWGPPSASMPLDGPKCKGKIPPIDLSTPDQWNGWGAGITNARFQPNPGLTAADVPRLKVKWAFNYPGSKNGQATVVGDRLFVTSMSGAVYALNAKTGCVYWRHDAAAATRSSVHVVQLPAGAPAQYAIFFSDWTKAAVALDAQTGKQLWKTTIDDQPGVQMTGSPTYHEGKLFVPISSGNEAFATNDQWECCKFRGALVALDALSGKVLWKTYTTQKEPAPFRLNKLGKQMWGPAGGSIWSAPTIDPKRGLVYVATSNSYTEVHHEGSDAVMAMEIETGKVRWINQVTKDDNYIIGCPRAANCPEKVGPDFALGNSPILHTLQDGRQYIVVGQKSGAVYAMDPDNDGELIWMRRVSPGSELGGVEFGMAADAENVYVGISDVITRKGGKPGVYALRIRDGADVWAFPAPRTPCRWNNIFCHPAVSQAVTAMPGVVFAGSMDGHFRAFSTSDGKVLWEFNTAAAPYKTVAGKQADGGVMDGAGPTIAGGMVYVHSGYAGRSTQNAGDLRGREGNVLIAFSVDGK</sequence>
<name>PVADH_PSESP</name>
<comment type="function">
    <text evidence="3">Catalyzes the oxidation of polyvinyl alcohol (PVA) in the polyvinyl alcohol degradation pathway.</text>
</comment>
<comment type="catalytic activity">
    <reaction evidence="3">
        <text>a polyvinyl alcohol + 2n Fe(III)-[cytochrome c] = an oxidized polyvinyl alcohol + 2n Fe(II)-[cytochrome c] + 2n H(+)</text>
        <dbReference type="Rhea" id="RHEA:20157"/>
        <dbReference type="Rhea" id="RHEA-COMP:10350"/>
        <dbReference type="Rhea" id="RHEA-COMP:12870"/>
        <dbReference type="Rhea" id="RHEA-COMP:12871"/>
        <dbReference type="Rhea" id="RHEA-COMP:14399"/>
        <dbReference type="ChEBI" id="CHEBI:15378"/>
        <dbReference type="ChEBI" id="CHEBI:16571"/>
        <dbReference type="ChEBI" id="CHEBI:17246"/>
        <dbReference type="ChEBI" id="CHEBI:29033"/>
        <dbReference type="ChEBI" id="CHEBI:29034"/>
        <dbReference type="EC" id="1.1.2.6"/>
    </reaction>
</comment>
<comment type="cofactor">
    <cofactor evidence="3">
        <name>pyrroloquinoline quinone</name>
        <dbReference type="ChEBI" id="CHEBI:58442"/>
    </cofactor>
</comment>
<comment type="subunit">
    <text evidence="1">Monomer.</text>
</comment>
<comment type="subcellular location">
    <subcellularLocation>
        <location evidence="3">Cytoplasm</location>
    </subcellularLocation>
</comment>
<comment type="similarity">
    <text evidence="4">Belongs to the bacterial PQQ dehydrogenase family.</text>
</comment>
<feature type="signal peptide" evidence="2">
    <location>
        <begin position="1"/>
        <end position="33"/>
    </location>
</feature>
<feature type="chain" id="PRO_5000139986" description="Polyvinylalcohol dehydrogenase">
    <location>
        <begin position="34"/>
        <end position="639"/>
    </location>
</feature>
<feature type="domain" description="Cytochrome c">
    <location>
        <begin position="36"/>
        <end position="152"/>
    </location>
</feature>
<feature type="binding site" description="covalent" evidence="1">
    <location>
        <position position="49"/>
    </location>
    <ligand>
        <name>heme</name>
        <dbReference type="ChEBI" id="CHEBI:30413"/>
    </ligand>
</feature>
<feature type="binding site" description="covalent" evidence="1">
    <location>
        <position position="52"/>
    </location>
    <ligand>
        <name>heme</name>
        <dbReference type="ChEBI" id="CHEBI:30413"/>
    </ligand>
</feature>
<feature type="binding site" description="axial binding residue" evidence="1">
    <location>
        <position position="53"/>
    </location>
    <ligand>
        <name>heme</name>
        <dbReference type="ChEBI" id="CHEBI:30413"/>
    </ligand>
    <ligandPart>
        <name>Fe</name>
        <dbReference type="ChEBI" id="CHEBI:18248"/>
    </ligandPart>
</feature>
<organism>
    <name type="scientific">Pseudomonas sp</name>
    <dbReference type="NCBI Taxonomy" id="306"/>
    <lineage>
        <taxon>Bacteria</taxon>
        <taxon>Pseudomonadati</taxon>
        <taxon>Pseudomonadota</taxon>
        <taxon>Gammaproteobacteria</taxon>
        <taxon>Pseudomonadales</taxon>
        <taxon>Pseudomonadaceae</taxon>
        <taxon>Pseudomonas</taxon>
    </lineage>
</organism>
<keyword id="KW-0963">Cytoplasm</keyword>
<keyword id="KW-0349">Heme</keyword>
<keyword id="KW-0408">Iron</keyword>
<keyword id="KW-0479">Metal-binding</keyword>
<keyword id="KW-0560">Oxidoreductase</keyword>
<keyword id="KW-0732">Signal</keyword>